<comment type="function">
    <text evidence="1">Catalyzes the reversible adenylation of nicotinate mononucleotide (NaMN) to nicotinic acid adenine dinucleotide (NaAD).</text>
</comment>
<comment type="catalytic activity">
    <reaction evidence="1">
        <text>nicotinate beta-D-ribonucleotide + ATP + H(+) = deamido-NAD(+) + diphosphate</text>
        <dbReference type="Rhea" id="RHEA:22860"/>
        <dbReference type="ChEBI" id="CHEBI:15378"/>
        <dbReference type="ChEBI" id="CHEBI:30616"/>
        <dbReference type="ChEBI" id="CHEBI:33019"/>
        <dbReference type="ChEBI" id="CHEBI:57502"/>
        <dbReference type="ChEBI" id="CHEBI:58437"/>
        <dbReference type="EC" id="2.7.7.18"/>
    </reaction>
</comment>
<comment type="pathway">
    <text evidence="1">Cofactor biosynthesis; NAD(+) biosynthesis; deamido-NAD(+) from nicotinate D-ribonucleotide: step 1/1.</text>
</comment>
<comment type="similarity">
    <text evidence="1">Belongs to the NadD family.</text>
</comment>
<evidence type="ECO:0000255" key="1">
    <source>
        <dbReference type="HAMAP-Rule" id="MF_00244"/>
    </source>
</evidence>
<proteinExistence type="inferred from homology"/>
<protein>
    <recommendedName>
        <fullName evidence="1">Probable nicotinate-nucleotide adenylyltransferase</fullName>
        <ecNumber evidence="1">2.7.7.18</ecNumber>
    </recommendedName>
    <alternativeName>
        <fullName evidence="1">Deamido-NAD(+) diphosphorylase</fullName>
    </alternativeName>
    <alternativeName>
        <fullName evidence="1">Deamido-NAD(+) pyrophosphorylase</fullName>
    </alternativeName>
    <alternativeName>
        <fullName evidence="1">Nicotinate mononucleotide adenylyltransferase</fullName>
        <shortName evidence="1">NaMN adenylyltransferase</shortName>
    </alternativeName>
</protein>
<accession>Q6GGA7</accession>
<gene>
    <name evidence="1" type="primary">nadD</name>
    <name type="ordered locus">SAR1671</name>
</gene>
<name>NADD_STAAR</name>
<reference key="1">
    <citation type="journal article" date="2004" name="Proc. Natl. Acad. Sci. U.S.A.">
        <title>Complete genomes of two clinical Staphylococcus aureus strains: evidence for the rapid evolution of virulence and drug resistance.</title>
        <authorList>
            <person name="Holden M.T.G."/>
            <person name="Feil E.J."/>
            <person name="Lindsay J.A."/>
            <person name="Peacock S.J."/>
            <person name="Day N.P.J."/>
            <person name="Enright M.C."/>
            <person name="Foster T.J."/>
            <person name="Moore C.E."/>
            <person name="Hurst L."/>
            <person name="Atkin R."/>
            <person name="Barron A."/>
            <person name="Bason N."/>
            <person name="Bentley S.D."/>
            <person name="Chillingworth C."/>
            <person name="Chillingworth T."/>
            <person name="Churcher C."/>
            <person name="Clark L."/>
            <person name="Corton C."/>
            <person name="Cronin A."/>
            <person name="Doggett J."/>
            <person name="Dowd L."/>
            <person name="Feltwell T."/>
            <person name="Hance Z."/>
            <person name="Harris B."/>
            <person name="Hauser H."/>
            <person name="Holroyd S."/>
            <person name="Jagels K."/>
            <person name="James K.D."/>
            <person name="Lennard N."/>
            <person name="Line A."/>
            <person name="Mayes R."/>
            <person name="Moule S."/>
            <person name="Mungall K."/>
            <person name="Ormond D."/>
            <person name="Quail M.A."/>
            <person name="Rabbinowitsch E."/>
            <person name="Rutherford K.M."/>
            <person name="Sanders M."/>
            <person name="Sharp S."/>
            <person name="Simmonds M."/>
            <person name="Stevens K."/>
            <person name="Whitehead S."/>
            <person name="Barrell B.G."/>
            <person name="Spratt B.G."/>
            <person name="Parkhill J."/>
        </authorList>
    </citation>
    <scope>NUCLEOTIDE SEQUENCE [LARGE SCALE GENOMIC DNA]</scope>
    <source>
        <strain>MRSA252</strain>
    </source>
</reference>
<sequence length="189" mass="22126">MKRIVLYGGQFNPIHTAHMIVASEVFHELQPDEFYFLPSFMSPLKKHHDFIDVQHRLTMIQMVIDELGFGDICDDEIKRGGQSYTYDTIKAFKEQHKDSELYFVIGTDQYNQLEKWYQIEYLKEMVTFVVVNRDKNSQNVENGMIAIQIPRVDISSTMIRQRVSKGKSIQVLVPKSVENYIKGEGLYEH</sequence>
<feature type="chain" id="PRO_0000181446" description="Probable nicotinate-nucleotide adenylyltransferase">
    <location>
        <begin position="1"/>
        <end position="189"/>
    </location>
</feature>
<keyword id="KW-0067">ATP-binding</keyword>
<keyword id="KW-0520">NAD</keyword>
<keyword id="KW-0547">Nucleotide-binding</keyword>
<keyword id="KW-0548">Nucleotidyltransferase</keyword>
<keyword id="KW-0662">Pyridine nucleotide biosynthesis</keyword>
<keyword id="KW-0808">Transferase</keyword>
<dbReference type="EC" id="2.7.7.18" evidence="1"/>
<dbReference type="EMBL" id="BX571856">
    <property type="protein sequence ID" value="CAG40665.1"/>
    <property type="molecule type" value="Genomic_DNA"/>
</dbReference>
<dbReference type="RefSeq" id="WP_000822938.1">
    <property type="nucleotide sequence ID" value="NC_002952.2"/>
</dbReference>
<dbReference type="SMR" id="Q6GGA7"/>
<dbReference type="KEGG" id="sar:SAR1671"/>
<dbReference type="HOGENOM" id="CLU_069765_3_1_9"/>
<dbReference type="UniPathway" id="UPA00253">
    <property type="reaction ID" value="UER00332"/>
</dbReference>
<dbReference type="Proteomes" id="UP000000596">
    <property type="component" value="Chromosome"/>
</dbReference>
<dbReference type="GO" id="GO:0005524">
    <property type="term" value="F:ATP binding"/>
    <property type="evidence" value="ECO:0007669"/>
    <property type="project" value="UniProtKB-KW"/>
</dbReference>
<dbReference type="GO" id="GO:0004515">
    <property type="term" value="F:nicotinate-nucleotide adenylyltransferase activity"/>
    <property type="evidence" value="ECO:0007669"/>
    <property type="project" value="UniProtKB-UniRule"/>
</dbReference>
<dbReference type="GO" id="GO:0009435">
    <property type="term" value="P:NAD biosynthetic process"/>
    <property type="evidence" value="ECO:0007669"/>
    <property type="project" value="UniProtKB-UniRule"/>
</dbReference>
<dbReference type="CDD" id="cd02165">
    <property type="entry name" value="NMNAT"/>
    <property type="match status" value="1"/>
</dbReference>
<dbReference type="Gene3D" id="3.40.50.620">
    <property type="entry name" value="HUPs"/>
    <property type="match status" value="1"/>
</dbReference>
<dbReference type="HAMAP" id="MF_00244">
    <property type="entry name" value="NaMN_adenylyltr"/>
    <property type="match status" value="1"/>
</dbReference>
<dbReference type="InterPro" id="IPR004821">
    <property type="entry name" value="Cyt_trans-like"/>
</dbReference>
<dbReference type="InterPro" id="IPR005248">
    <property type="entry name" value="NadD/NMNAT"/>
</dbReference>
<dbReference type="InterPro" id="IPR014729">
    <property type="entry name" value="Rossmann-like_a/b/a_fold"/>
</dbReference>
<dbReference type="NCBIfam" id="TIGR00482">
    <property type="entry name" value="nicotinate (nicotinamide) nucleotide adenylyltransferase"/>
    <property type="match status" value="1"/>
</dbReference>
<dbReference type="NCBIfam" id="NF000840">
    <property type="entry name" value="PRK00071.1-3"/>
    <property type="match status" value="1"/>
</dbReference>
<dbReference type="NCBIfam" id="NF000841">
    <property type="entry name" value="PRK00071.1-4"/>
    <property type="match status" value="1"/>
</dbReference>
<dbReference type="PANTHER" id="PTHR39321">
    <property type="entry name" value="NICOTINATE-NUCLEOTIDE ADENYLYLTRANSFERASE-RELATED"/>
    <property type="match status" value="1"/>
</dbReference>
<dbReference type="PANTHER" id="PTHR39321:SF3">
    <property type="entry name" value="PHOSPHOPANTETHEINE ADENYLYLTRANSFERASE"/>
    <property type="match status" value="1"/>
</dbReference>
<dbReference type="Pfam" id="PF01467">
    <property type="entry name" value="CTP_transf_like"/>
    <property type="match status" value="1"/>
</dbReference>
<dbReference type="SUPFAM" id="SSF52374">
    <property type="entry name" value="Nucleotidylyl transferase"/>
    <property type="match status" value="1"/>
</dbReference>
<organism>
    <name type="scientific">Staphylococcus aureus (strain MRSA252)</name>
    <dbReference type="NCBI Taxonomy" id="282458"/>
    <lineage>
        <taxon>Bacteria</taxon>
        <taxon>Bacillati</taxon>
        <taxon>Bacillota</taxon>
        <taxon>Bacilli</taxon>
        <taxon>Bacillales</taxon>
        <taxon>Staphylococcaceae</taxon>
        <taxon>Staphylococcus</taxon>
    </lineage>
</organism>